<name>CBIN_METTM</name>
<accession>Q50799</accession>
<accession>D9PVC8</accession>
<proteinExistence type="inferred from homology"/>
<feature type="chain" id="PRO_0000134704" description="Cobalt transport protein CbiN">
    <location>
        <begin position="1"/>
        <end position="95"/>
    </location>
</feature>
<feature type="transmembrane region" description="Helical" evidence="1">
    <location>
        <begin position="7"/>
        <end position="27"/>
    </location>
</feature>
<feature type="transmembrane region" description="Helical" evidence="1">
    <location>
        <begin position="67"/>
        <end position="87"/>
    </location>
</feature>
<gene>
    <name evidence="1" type="primary">cbiN</name>
    <name type="ordered locus">MTBMA_c05810</name>
</gene>
<evidence type="ECO:0000255" key="1">
    <source>
        <dbReference type="HAMAP-Rule" id="MF_00330"/>
    </source>
</evidence>
<dbReference type="EMBL" id="X94292">
    <property type="protein sequence ID" value="CAA63956.1"/>
    <property type="molecule type" value="Genomic_DNA"/>
</dbReference>
<dbReference type="EMBL" id="CP001710">
    <property type="protein sequence ID" value="ADL58176.1"/>
    <property type="molecule type" value="Genomic_DNA"/>
</dbReference>
<dbReference type="RefSeq" id="WP_013295400.1">
    <property type="nucleotide sequence ID" value="NC_014408.1"/>
</dbReference>
<dbReference type="STRING" id="79929.MTBMA_c05810"/>
<dbReference type="PaxDb" id="79929-MTBMA_c05810"/>
<dbReference type="GeneID" id="77399362"/>
<dbReference type="GeneID" id="9704289"/>
<dbReference type="KEGG" id="mmg:MTBMA_c05810"/>
<dbReference type="PATRIC" id="fig|79929.8.peg.565"/>
<dbReference type="HOGENOM" id="CLU_136197_2_0_2"/>
<dbReference type="OrthoDB" id="187156at2157"/>
<dbReference type="UniPathway" id="UPA00148"/>
<dbReference type="Proteomes" id="UP000000345">
    <property type="component" value="Chromosome"/>
</dbReference>
<dbReference type="GO" id="GO:0005886">
    <property type="term" value="C:plasma membrane"/>
    <property type="evidence" value="ECO:0007669"/>
    <property type="project" value="UniProtKB-SubCell"/>
</dbReference>
<dbReference type="GO" id="GO:0015087">
    <property type="term" value="F:cobalt ion transmembrane transporter activity"/>
    <property type="evidence" value="ECO:0007669"/>
    <property type="project" value="UniProtKB-UniRule"/>
</dbReference>
<dbReference type="GO" id="GO:0009236">
    <property type="term" value="P:cobalamin biosynthetic process"/>
    <property type="evidence" value="ECO:0007669"/>
    <property type="project" value="UniProtKB-UniRule"/>
</dbReference>
<dbReference type="HAMAP" id="MF_00330">
    <property type="entry name" value="CbiN"/>
    <property type="match status" value="1"/>
</dbReference>
<dbReference type="InterPro" id="IPR003705">
    <property type="entry name" value="CbiN"/>
</dbReference>
<dbReference type="NCBIfam" id="TIGR01165">
    <property type="entry name" value="cbiN"/>
    <property type="match status" value="1"/>
</dbReference>
<dbReference type="NCBIfam" id="NF002780">
    <property type="entry name" value="PRK02898.1"/>
    <property type="match status" value="1"/>
</dbReference>
<dbReference type="PANTHER" id="PTHR38662">
    <property type="entry name" value="COBALT TRANSPORT PROTEIN CBIN"/>
    <property type="match status" value="1"/>
</dbReference>
<dbReference type="PANTHER" id="PTHR38662:SF1">
    <property type="entry name" value="COBALT TRANSPORT PROTEIN CBIN"/>
    <property type="match status" value="1"/>
</dbReference>
<dbReference type="Pfam" id="PF02553">
    <property type="entry name" value="CbiN"/>
    <property type="match status" value="1"/>
</dbReference>
<organism>
    <name type="scientific">Methanothermobacter marburgensis (strain ATCC BAA-927 / DSM 2133 / JCM 14651 / NBRC 100331 / OCM 82 / Marburg)</name>
    <name type="common">Methanobacterium thermoautotrophicum</name>
    <dbReference type="NCBI Taxonomy" id="79929"/>
    <lineage>
        <taxon>Archaea</taxon>
        <taxon>Methanobacteriati</taxon>
        <taxon>Methanobacteriota</taxon>
        <taxon>Methanomada group</taxon>
        <taxon>Methanobacteria</taxon>
        <taxon>Methanobacteriales</taxon>
        <taxon>Methanobacteriaceae</taxon>
        <taxon>Methanothermobacter</taxon>
    </lineage>
</organism>
<comment type="function">
    <text evidence="1">Part of the energy-coupling factor (ECF) transporter complex CbiMNOQ involved in cobalt import.</text>
</comment>
<comment type="pathway">
    <text evidence="1">Cofactor biosynthesis; adenosylcobalamin biosynthesis.</text>
</comment>
<comment type="subunit">
    <text evidence="1">Forms an energy-coupling factor (ECF) transporter complex composed of an ATP-binding protein (A component, CbiO), a transmembrane protein (T component, CbiQ) and 2 possible substrate-capture proteins (S components, CbiM and CbiN) of unknown stoichimetry.</text>
</comment>
<comment type="subcellular location">
    <subcellularLocation>
        <location evidence="1">Cell membrane</location>
        <topology evidence="1">Multi-pass membrane protein</topology>
    </subcellularLocation>
</comment>
<comment type="similarity">
    <text evidence="1">Belongs to the CbiN family.</text>
</comment>
<keyword id="KW-1003">Cell membrane</keyword>
<keyword id="KW-0169">Cobalamin biosynthesis</keyword>
<keyword id="KW-0170">Cobalt</keyword>
<keyword id="KW-0171">Cobalt transport</keyword>
<keyword id="KW-0406">Ion transport</keyword>
<keyword id="KW-0472">Membrane</keyword>
<keyword id="KW-0812">Transmembrane</keyword>
<keyword id="KW-1133">Transmembrane helix</keyword>
<keyword id="KW-0813">Transport</keyword>
<sequence length="95" mass="10254">MDKRHTIMLIAVAVIAIAPLVIYSGLGEDQGYFGGADDSASKAISETGYKPWFQPIWEPPSGEIESLLFALQAAIGALIIGYVFGYYRGRGESPE</sequence>
<protein>
    <recommendedName>
        <fullName evidence="1">Cobalt transport protein CbiN</fullName>
    </recommendedName>
    <alternativeName>
        <fullName evidence="1">Energy-coupling factor transporter probable substrate-capture protein CbiN</fullName>
        <shortName evidence="1">ECF transporter S component CbiN</shortName>
    </alternativeName>
</protein>
<reference key="1">
    <citation type="journal article" date="1997" name="J. Bacteriol.">
        <title>Biosynthesis of riboflavin: an unusual riboflavin synthase of Methanobacterium thermoautotrophicum.</title>
        <authorList>
            <person name="Eberhardt S."/>
            <person name="Korn S."/>
            <person name="Lottspeich F."/>
            <person name="Bacher A."/>
        </authorList>
    </citation>
    <scope>NUCLEOTIDE SEQUENCE [GENOMIC DNA]</scope>
    <source>
        <strain>ATCC BAA-927 / DSM 2133 / JCM 14651 / NBRC 100331 / OCM 82 / Marburg</strain>
    </source>
</reference>
<reference key="2">
    <citation type="journal article" date="2010" name="J. Bacteriol.">
        <title>Complete genome sequence of Methanothermobacter marburgensis, a methanoarchaeon model organism.</title>
        <authorList>
            <person name="Liesegang H."/>
            <person name="Kaster A.K."/>
            <person name="Wiezer A."/>
            <person name="Goenrich M."/>
            <person name="Wollherr A."/>
            <person name="Seedorf H."/>
            <person name="Gottschalk G."/>
            <person name="Thauer R.K."/>
        </authorList>
    </citation>
    <scope>NUCLEOTIDE SEQUENCE [LARGE SCALE GENOMIC DNA]</scope>
    <source>
        <strain>ATCC BAA-927 / DSM 2133 / JCM 14651 / NBRC 100331 / OCM 82 / Marburg</strain>
    </source>
</reference>